<gene>
    <name evidence="1" type="primary">nrdR</name>
    <name type="ordered locus">cce_0391</name>
</gene>
<protein>
    <recommendedName>
        <fullName evidence="1">Transcriptional repressor NrdR</fullName>
    </recommendedName>
</protein>
<accession>B1WNA0</accession>
<keyword id="KW-0067">ATP-binding</keyword>
<keyword id="KW-0238">DNA-binding</keyword>
<keyword id="KW-0479">Metal-binding</keyword>
<keyword id="KW-0547">Nucleotide-binding</keyword>
<keyword id="KW-1185">Reference proteome</keyword>
<keyword id="KW-0678">Repressor</keyword>
<keyword id="KW-0804">Transcription</keyword>
<keyword id="KW-0805">Transcription regulation</keyword>
<keyword id="KW-0862">Zinc</keyword>
<keyword id="KW-0863">Zinc-finger</keyword>
<comment type="function">
    <text evidence="1">Negatively regulates transcription of bacterial ribonucleotide reductase nrd genes and operons by binding to NrdR-boxes.</text>
</comment>
<comment type="cofactor">
    <cofactor evidence="1">
        <name>Zn(2+)</name>
        <dbReference type="ChEBI" id="CHEBI:29105"/>
    </cofactor>
    <text evidence="1">Binds 1 zinc ion.</text>
</comment>
<comment type="similarity">
    <text evidence="1">Belongs to the NrdR family.</text>
</comment>
<evidence type="ECO:0000255" key="1">
    <source>
        <dbReference type="HAMAP-Rule" id="MF_00440"/>
    </source>
</evidence>
<evidence type="ECO:0000256" key="2">
    <source>
        <dbReference type="SAM" id="MobiDB-lite"/>
    </source>
</evidence>
<feature type="chain" id="PRO_1000191791" description="Transcriptional repressor NrdR">
    <location>
        <begin position="1"/>
        <end position="187"/>
    </location>
</feature>
<feature type="domain" description="ATP-cone" evidence="1">
    <location>
        <begin position="49"/>
        <end position="139"/>
    </location>
</feature>
<feature type="zinc finger region" evidence="1">
    <location>
        <begin position="3"/>
        <end position="34"/>
    </location>
</feature>
<feature type="region of interest" description="Disordered" evidence="2">
    <location>
        <begin position="1"/>
        <end position="21"/>
    </location>
</feature>
<feature type="region of interest" description="Disordered" evidence="2">
    <location>
        <begin position="152"/>
        <end position="187"/>
    </location>
</feature>
<feature type="compositionally biased region" description="Polar residues" evidence="2">
    <location>
        <begin position="152"/>
        <end position="162"/>
    </location>
</feature>
<feature type="compositionally biased region" description="Polar residues" evidence="2">
    <location>
        <begin position="170"/>
        <end position="187"/>
    </location>
</feature>
<proteinExistence type="inferred from homology"/>
<reference key="1">
    <citation type="journal article" date="2008" name="Proc. Natl. Acad. Sci. U.S.A.">
        <title>The genome of Cyanothece 51142, a unicellular diazotrophic cyanobacterium important in the marine nitrogen cycle.</title>
        <authorList>
            <person name="Welsh E.A."/>
            <person name="Liberton M."/>
            <person name="Stoeckel J."/>
            <person name="Loh T."/>
            <person name="Elvitigala T."/>
            <person name="Wang C."/>
            <person name="Wollam A."/>
            <person name="Fulton R.S."/>
            <person name="Clifton S.W."/>
            <person name="Jacobs J.M."/>
            <person name="Aurora R."/>
            <person name="Ghosh B.K."/>
            <person name="Sherman L.A."/>
            <person name="Smith R.D."/>
            <person name="Wilson R.K."/>
            <person name="Pakrasi H.B."/>
        </authorList>
    </citation>
    <scope>NUCLEOTIDE SEQUENCE [LARGE SCALE GENOMIC DNA]</scope>
    <source>
        <strain>ATCC 51142 / BH68</strain>
    </source>
</reference>
<sequence length="187" mass="21749">MQCPYCQHTNSRVLESRSSEGGQSIRRRRECLNCKHRFTTYERIEFVPITVIKHDGKKESFDASKLLRGMVRACEKTGISHQRLETIVDDIEAYLQQRPQREVTTHEIGQLVLKYLREENEVAYIRFASVYGRFKGIKDFVETLDQLQEETISSPMSQWSKSSTRDRDQSQTSPCLSLTHNGSENSR</sequence>
<organism>
    <name type="scientific">Crocosphaera subtropica (strain ATCC 51142 / BH68)</name>
    <name type="common">Cyanothece sp. (strain ATCC 51142)</name>
    <dbReference type="NCBI Taxonomy" id="43989"/>
    <lineage>
        <taxon>Bacteria</taxon>
        <taxon>Bacillati</taxon>
        <taxon>Cyanobacteriota</taxon>
        <taxon>Cyanophyceae</taxon>
        <taxon>Oscillatoriophycideae</taxon>
        <taxon>Chroococcales</taxon>
        <taxon>Aphanothecaceae</taxon>
        <taxon>Crocosphaera</taxon>
        <taxon>Crocosphaera subtropica</taxon>
    </lineage>
</organism>
<dbReference type="EMBL" id="CP000806">
    <property type="protein sequence ID" value="ACB49742.1"/>
    <property type="molecule type" value="Genomic_DNA"/>
</dbReference>
<dbReference type="RefSeq" id="WP_009546480.1">
    <property type="nucleotide sequence ID" value="NC_010546.1"/>
</dbReference>
<dbReference type="SMR" id="B1WNA0"/>
<dbReference type="STRING" id="43989.cce_0391"/>
<dbReference type="KEGG" id="cyt:cce_0391"/>
<dbReference type="eggNOG" id="COG1327">
    <property type="taxonomic scope" value="Bacteria"/>
</dbReference>
<dbReference type="HOGENOM" id="CLU_108412_0_0_3"/>
<dbReference type="OrthoDB" id="9807461at2"/>
<dbReference type="Proteomes" id="UP000001203">
    <property type="component" value="Chromosome circular"/>
</dbReference>
<dbReference type="GO" id="GO:0005524">
    <property type="term" value="F:ATP binding"/>
    <property type="evidence" value="ECO:0007669"/>
    <property type="project" value="UniProtKB-KW"/>
</dbReference>
<dbReference type="GO" id="GO:0003677">
    <property type="term" value="F:DNA binding"/>
    <property type="evidence" value="ECO:0007669"/>
    <property type="project" value="UniProtKB-KW"/>
</dbReference>
<dbReference type="GO" id="GO:0008270">
    <property type="term" value="F:zinc ion binding"/>
    <property type="evidence" value="ECO:0007669"/>
    <property type="project" value="UniProtKB-UniRule"/>
</dbReference>
<dbReference type="GO" id="GO:0045892">
    <property type="term" value="P:negative regulation of DNA-templated transcription"/>
    <property type="evidence" value="ECO:0007669"/>
    <property type="project" value="UniProtKB-UniRule"/>
</dbReference>
<dbReference type="HAMAP" id="MF_00440">
    <property type="entry name" value="NrdR"/>
    <property type="match status" value="1"/>
</dbReference>
<dbReference type="InterPro" id="IPR005144">
    <property type="entry name" value="ATP-cone_dom"/>
</dbReference>
<dbReference type="InterPro" id="IPR055173">
    <property type="entry name" value="NrdR-like_N"/>
</dbReference>
<dbReference type="InterPro" id="IPR003796">
    <property type="entry name" value="RNR_NrdR-like"/>
</dbReference>
<dbReference type="NCBIfam" id="TIGR00244">
    <property type="entry name" value="transcriptional regulator NrdR"/>
    <property type="match status" value="1"/>
</dbReference>
<dbReference type="PANTHER" id="PTHR30455">
    <property type="entry name" value="TRANSCRIPTIONAL REPRESSOR NRDR"/>
    <property type="match status" value="1"/>
</dbReference>
<dbReference type="PANTHER" id="PTHR30455:SF2">
    <property type="entry name" value="TRANSCRIPTIONAL REPRESSOR NRDR"/>
    <property type="match status" value="1"/>
</dbReference>
<dbReference type="Pfam" id="PF03477">
    <property type="entry name" value="ATP-cone"/>
    <property type="match status" value="1"/>
</dbReference>
<dbReference type="Pfam" id="PF22811">
    <property type="entry name" value="Zn_ribbon_NrdR"/>
    <property type="match status" value="1"/>
</dbReference>
<dbReference type="PROSITE" id="PS51161">
    <property type="entry name" value="ATP_CONE"/>
    <property type="match status" value="1"/>
</dbReference>
<name>NRDR_CROS5</name>